<reference key="1">
    <citation type="journal article" date="2005" name="BMC Genomics">
        <title>Characterization of 954 bovine full-CDS cDNA sequences.</title>
        <authorList>
            <person name="Harhay G.P."/>
            <person name="Sonstegard T.S."/>
            <person name="Keele J.W."/>
            <person name="Heaton M.P."/>
            <person name="Clawson M.L."/>
            <person name="Snelling W.M."/>
            <person name="Wiedmann R.T."/>
            <person name="Van Tassell C.P."/>
            <person name="Smith T.P.L."/>
        </authorList>
    </citation>
    <scope>NUCLEOTIDE SEQUENCE [LARGE SCALE MRNA]</scope>
</reference>
<reference evidence="7" key="2">
    <citation type="submission" date="2005-08" db="EMBL/GenBank/DDBJ databases">
        <authorList>
            <consortium name="NIH - Mammalian Gene Collection (MGC) project"/>
        </authorList>
    </citation>
    <scope>NUCLEOTIDE SEQUENCE [LARGE SCALE MRNA]</scope>
    <source>
        <strain evidence="6">Crossbred X Angus</strain>
        <tissue evidence="6">Ileum</tissue>
    </source>
</reference>
<keyword id="KW-0007">Acetylation</keyword>
<keyword id="KW-0012">Acyltransferase</keyword>
<keyword id="KW-0256">Endoplasmic reticulum</keyword>
<keyword id="KW-0444">Lipid biosynthesis</keyword>
<keyword id="KW-0443">Lipid metabolism</keyword>
<keyword id="KW-0472">Membrane</keyword>
<keyword id="KW-0594">Phospholipid biosynthesis</keyword>
<keyword id="KW-1208">Phospholipid metabolism</keyword>
<keyword id="KW-1185">Reference proteome</keyword>
<keyword id="KW-0808">Transferase</keyword>
<keyword id="KW-0812">Transmembrane</keyword>
<keyword id="KW-1133">Transmembrane helix</keyword>
<accession>Q3SZL3</accession>
<accession>Q58CS9</accession>
<organism>
    <name type="scientific">Bos taurus</name>
    <name type="common">Bovine</name>
    <dbReference type="NCBI Taxonomy" id="9913"/>
    <lineage>
        <taxon>Eukaryota</taxon>
        <taxon>Metazoa</taxon>
        <taxon>Chordata</taxon>
        <taxon>Craniata</taxon>
        <taxon>Vertebrata</taxon>
        <taxon>Euteleostomi</taxon>
        <taxon>Mammalia</taxon>
        <taxon>Eutheria</taxon>
        <taxon>Laurasiatheria</taxon>
        <taxon>Artiodactyla</taxon>
        <taxon>Ruminantia</taxon>
        <taxon>Pecora</taxon>
        <taxon>Bovidae</taxon>
        <taxon>Bovinae</taxon>
        <taxon>Bos</taxon>
    </lineage>
</organism>
<name>MBOA5_BOVIN</name>
<gene>
    <name type="primary">LPCAT3</name>
    <name type="synonym">MBOAT5</name>
    <name type="synonym">OACT5</name>
</gene>
<comment type="function">
    <text evidence="2 3">Lysophospholipid O-acyltransferase (LPLAT) that catalyzes the reacylation step of the phospholipid remodeling process also known as the Lands cycle. Catalyzes transfer of the fatty acyl chain from fatty acyl-CoA to 1-acyl lysophospholipid to form various classes of phospholipids. Converts 1-acyl lysophosphatidylcholine (LPC) into phosphatidylcholine (PC) (LPCAT activity), 1-acyl lysophosphatidylserine (LPS) into phosphatidylserine (PS) (LPSAT activity) and 1-acyl lysophosphatidylethanolamine (LPE) into phosphatidylethanolamine (PE) (LPEAT activity). Favors polyunsaturated fatty acyl-CoAs as acyl donors compared to saturated fatty acyl-CoAs (By similarity). Has higher activity for LPC acyl acceptors compared to LPEs and LPSs. Can also transfer the fatty acyl chain from fatty acyl-CoA to 1-O-alkyl lysophospholipid or 1-O-alkenyl lysophospholipid with lower efficiency. Acts as a major LPC O-acyltransferase in liver and intestine. As a component of the liver X receptor/NR1H3 or NR1H2 signaling pathway, mainly catalyzes the incorporation of arachidonate into PCs of endoplasmic reticulum (ER) membranes, increasing membrane dynamics and enabling triacylglycerols transfer to nascent very low-density lipoprotein (VLDL) particles. Promotes processing of sterol regulatory protein SREBF1 in hepatocytes, likely by facilitating the translocation of SREBF1-SCAP complex from ER to the Golgi apparatus. Participates in mechanisms by which the liver X receptor/NR1H3 or NR1H2 signaling pathway counteracts lipid-induced ER stress response and inflammation. Down-regulates hepatic inflammation by limiting arachidonic acid availability for synthesis of inflammatory eicosanoids, such as prostaglandins. In enterocytes, acts as a component of a gut-brain feedback loop that coordinates dietary lipid absorption and food intake. Regulates the abundance of PCs containing linoleate and arachidonate in enterocyte membranes, enabling passive diffusion of fatty acids and cholesterol across the membrane for efficient chylomicron assembly. In the intestinal crypt, acts as a component of dietary-responsive phospholipid-cholesterol axis, regulating the biosynthesis of cholesterol and its mitogenic effects on intestinal stem cells (By similarity).</text>
</comment>
<comment type="catalytic activity">
    <reaction evidence="2">
        <text>a 1-acyl-sn-glycero-3-phosphocholine + an acyl-CoA = a 1,2-diacyl-sn-glycero-3-phosphocholine + CoA</text>
        <dbReference type="Rhea" id="RHEA:12937"/>
        <dbReference type="ChEBI" id="CHEBI:57287"/>
        <dbReference type="ChEBI" id="CHEBI:57643"/>
        <dbReference type="ChEBI" id="CHEBI:58168"/>
        <dbReference type="ChEBI" id="CHEBI:58342"/>
        <dbReference type="EC" id="2.3.1.23"/>
    </reaction>
    <physiologicalReaction direction="left-to-right" evidence="2">
        <dbReference type="Rhea" id="RHEA:12938"/>
    </physiologicalReaction>
</comment>
<comment type="catalytic activity">
    <reaction evidence="2">
        <text>a 1-acyl-sn-glycero-3-phosphoethanolamine + an acyl-CoA = a 1,2-diacyl-sn-glycero-3-phosphoethanolamine + CoA</text>
        <dbReference type="Rhea" id="RHEA:32995"/>
        <dbReference type="ChEBI" id="CHEBI:57287"/>
        <dbReference type="ChEBI" id="CHEBI:58342"/>
        <dbReference type="ChEBI" id="CHEBI:64381"/>
        <dbReference type="ChEBI" id="CHEBI:64612"/>
        <dbReference type="EC" id="2.3.1.n7"/>
    </reaction>
    <physiologicalReaction direction="left-to-right" evidence="2">
        <dbReference type="Rhea" id="RHEA:32996"/>
    </physiologicalReaction>
</comment>
<comment type="catalytic activity">
    <reaction evidence="2">
        <text>a 1-acyl-sn-glycero-3-phospho-L-serine + an acyl-CoA = a 1,2-diacyl-sn-glycero-3-phospho-L-serine + CoA</text>
        <dbReference type="Rhea" id="RHEA:33191"/>
        <dbReference type="ChEBI" id="CHEBI:57262"/>
        <dbReference type="ChEBI" id="CHEBI:57287"/>
        <dbReference type="ChEBI" id="CHEBI:58342"/>
        <dbReference type="ChEBI" id="CHEBI:64379"/>
        <dbReference type="EC" id="2.3.1.n6"/>
    </reaction>
    <physiologicalReaction direction="left-to-right" evidence="2">
        <dbReference type="Rhea" id="RHEA:33192"/>
    </physiologicalReaction>
</comment>
<comment type="catalytic activity">
    <reaction evidence="2">
        <text>(9Z,12Z)-octadecadienoyl-CoA + a 1-acyl-sn-glycero-3-phosphocholine = 1-acyl-2-(9Z,12Z)-octadecadienoyl-sn-glycero-3-phosphocholine + CoA</text>
        <dbReference type="Rhea" id="RHEA:37563"/>
        <dbReference type="ChEBI" id="CHEBI:57287"/>
        <dbReference type="ChEBI" id="CHEBI:57383"/>
        <dbReference type="ChEBI" id="CHEBI:58168"/>
        <dbReference type="ChEBI" id="CHEBI:60000"/>
    </reaction>
    <physiologicalReaction direction="left-to-right" evidence="2">
        <dbReference type="Rhea" id="RHEA:37564"/>
    </physiologicalReaction>
</comment>
<comment type="catalytic activity">
    <reaction evidence="2">
        <text>(5Z,8Z,11Z,14Z)-eicosatetraenoyl-CoA + a 1-acyl-sn-glycero-3-phosphocholine = 1-acyl-2-(5Z,8Z,11Z,14Z-eicosatetraenoyl)-sn-glycero-3-phosphocholine + CoA</text>
        <dbReference type="Rhea" id="RHEA:37559"/>
        <dbReference type="ChEBI" id="CHEBI:57287"/>
        <dbReference type="ChEBI" id="CHEBI:57368"/>
        <dbReference type="ChEBI" id="CHEBI:58168"/>
        <dbReference type="ChEBI" id="CHEBI:75063"/>
    </reaction>
    <physiologicalReaction direction="left-to-right" evidence="2">
        <dbReference type="Rhea" id="RHEA:37560"/>
    </physiologicalReaction>
</comment>
<comment type="catalytic activity">
    <reaction evidence="2">
        <text>dodecanoyl-CoA + 1-hexadecanoyl-sn-glycero-3-phosphocholine = 1-hexadecanoyl-2-dodecanoyl-sn-glycero-3-phosphocholine + CoA</text>
        <dbReference type="Rhea" id="RHEA:37515"/>
        <dbReference type="ChEBI" id="CHEBI:57287"/>
        <dbReference type="ChEBI" id="CHEBI:57375"/>
        <dbReference type="ChEBI" id="CHEBI:72998"/>
        <dbReference type="ChEBI" id="CHEBI:75018"/>
    </reaction>
    <physiologicalReaction direction="left-to-right" evidence="2">
        <dbReference type="Rhea" id="RHEA:37516"/>
    </physiologicalReaction>
</comment>
<comment type="catalytic activity">
    <reaction evidence="2">
        <text>octadecanoyl-CoA + 1-hexadecanoyl-sn-glycero-3-phosphocholine = 1-hexadecanoyl-2-octadecanoyl-sn-glycero-3-phosphocholine + CoA</text>
        <dbReference type="Rhea" id="RHEA:35987"/>
        <dbReference type="ChEBI" id="CHEBI:57287"/>
        <dbReference type="ChEBI" id="CHEBI:57394"/>
        <dbReference type="ChEBI" id="CHEBI:72998"/>
        <dbReference type="ChEBI" id="CHEBI:73000"/>
    </reaction>
    <physiologicalReaction direction="left-to-right" evidence="2">
        <dbReference type="Rhea" id="RHEA:35988"/>
    </physiologicalReaction>
</comment>
<comment type="catalytic activity">
    <reaction evidence="2">
        <text>1-dodecanoyl-sn-glycero-3-phosphocholine + hexadecanoyl-CoA = 1-dodecanoyl-2-hexadecanoyl-sn-glycero-3-phosphocholine + CoA</text>
        <dbReference type="Rhea" id="RHEA:37511"/>
        <dbReference type="ChEBI" id="CHEBI:57287"/>
        <dbReference type="ChEBI" id="CHEBI:57379"/>
        <dbReference type="ChEBI" id="CHEBI:74966"/>
        <dbReference type="ChEBI" id="CHEBI:75017"/>
    </reaction>
    <physiologicalReaction direction="left-to-right" evidence="2">
        <dbReference type="Rhea" id="RHEA:37512"/>
    </physiologicalReaction>
</comment>
<comment type="catalytic activity">
    <reaction evidence="2">
        <text>1-tetradecanoyl-sn-glycero-3-phosphocholine + hexadecanoyl-CoA = 1-tetradecanoyl-2-hexadecanoyl-sn-glycero-3-phosphocholine + CoA</text>
        <dbReference type="Rhea" id="RHEA:37655"/>
        <dbReference type="ChEBI" id="CHEBI:57287"/>
        <dbReference type="ChEBI" id="CHEBI:57379"/>
        <dbReference type="ChEBI" id="CHEBI:64489"/>
        <dbReference type="ChEBI" id="CHEBI:75062"/>
    </reaction>
    <physiologicalReaction direction="left-to-right" evidence="2">
        <dbReference type="Rhea" id="RHEA:37656"/>
    </physiologicalReaction>
</comment>
<comment type="catalytic activity">
    <reaction evidence="2">
        <text>1-hexadecanoyl-sn-glycero-3-phosphocholine + hexadecanoyl-CoA = 1,2-dihexadecanoyl-sn-glycero-3-phosphocholine + CoA</text>
        <dbReference type="Rhea" id="RHEA:35983"/>
        <dbReference type="ChEBI" id="CHEBI:57287"/>
        <dbReference type="ChEBI" id="CHEBI:57379"/>
        <dbReference type="ChEBI" id="CHEBI:72998"/>
        <dbReference type="ChEBI" id="CHEBI:72999"/>
    </reaction>
    <physiologicalReaction direction="left-to-right" evidence="2">
        <dbReference type="Rhea" id="RHEA:35984"/>
    </physiologicalReaction>
</comment>
<comment type="catalytic activity">
    <reaction evidence="2">
        <text>1-octadecanoyl-sn-glycero-3-phosphocholine + hexadecanoyl-CoA = 1-octadecanoyl-2-hexadecanoyl-sn-glycero-3-phosphocholine + CoA</text>
        <dbReference type="Rhea" id="RHEA:37527"/>
        <dbReference type="ChEBI" id="CHEBI:57287"/>
        <dbReference type="ChEBI" id="CHEBI:57379"/>
        <dbReference type="ChEBI" id="CHEBI:73858"/>
        <dbReference type="ChEBI" id="CHEBI:75026"/>
    </reaction>
    <physiologicalReaction direction="left-to-right" evidence="2">
        <dbReference type="Rhea" id="RHEA:37528"/>
    </physiologicalReaction>
</comment>
<comment type="catalytic activity">
    <reaction evidence="2">
        <text>1-(9Z-octadecenoyl)-sn-glycero-3-phosphocholine + hexadecanoyl-CoA = 1-(9Z-octadecenoyl)-2-hexadecanoyl-sn-glycero-3-phosphocholine + CoA</text>
        <dbReference type="Rhea" id="RHEA:37383"/>
        <dbReference type="ChEBI" id="CHEBI:28610"/>
        <dbReference type="ChEBI" id="CHEBI:57287"/>
        <dbReference type="ChEBI" id="CHEBI:57379"/>
        <dbReference type="ChEBI" id="CHEBI:74667"/>
    </reaction>
    <physiologicalReaction direction="left-to-right" evidence="2">
        <dbReference type="Rhea" id="RHEA:37384"/>
    </physiologicalReaction>
</comment>
<comment type="catalytic activity">
    <reaction evidence="2">
        <text>(9Z)-hexadecenoyl-CoA + 1-hexadecanoyl-sn-glycero-3-phosphocholine = 1-hexadecanoyl-2-(9Z-hexadecenoyl)-sn-glycero-3-phosphocholine + CoA</text>
        <dbReference type="Rhea" id="RHEA:37207"/>
        <dbReference type="ChEBI" id="CHEBI:57287"/>
        <dbReference type="ChEBI" id="CHEBI:61540"/>
        <dbReference type="ChEBI" id="CHEBI:72998"/>
        <dbReference type="ChEBI" id="CHEBI:74000"/>
    </reaction>
    <physiologicalReaction direction="left-to-right" evidence="2">
        <dbReference type="Rhea" id="RHEA:37208"/>
    </physiologicalReaction>
</comment>
<comment type="catalytic activity">
    <reaction evidence="2">
        <text>1-hexadecanoyl-sn-glycero-3-phosphocholine + (9Z)-octadecenoyl-CoA = 1-hexadecanoyl-2-(9Z-octadecenoyl)-sn-glycero-3-phosphocholine + CoA</text>
        <dbReference type="Rhea" id="RHEA:35991"/>
        <dbReference type="ChEBI" id="CHEBI:57287"/>
        <dbReference type="ChEBI" id="CHEBI:57387"/>
        <dbReference type="ChEBI" id="CHEBI:72998"/>
        <dbReference type="ChEBI" id="CHEBI:73001"/>
    </reaction>
    <physiologicalReaction direction="left-to-right" evidence="2">
        <dbReference type="Rhea" id="RHEA:35992"/>
    </physiologicalReaction>
</comment>
<comment type="catalytic activity">
    <reaction evidence="2">
        <text>(9Z,12Z)-octadecadienoyl-CoA + 1-hexadecanoyl-sn-glycero-3-phosphocholine = 1-hexadecanoyl-2-(9Z,12Z-octadecadienoyl)-sn-glycero-3-phosphocholine + CoA</text>
        <dbReference type="Rhea" id="RHEA:35995"/>
        <dbReference type="ChEBI" id="CHEBI:57287"/>
        <dbReference type="ChEBI" id="CHEBI:57383"/>
        <dbReference type="ChEBI" id="CHEBI:72998"/>
        <dbReference type="ChEBI" id="CHEBI:73002"/>
    </reaction>
    <physiologicalReaction direction="left-to-right" evidence="2">
        <dbReference type="Rhea" id="RHEA:35996"/>
    </physiologicalReaction>
</comment>
<comment type="catalytic activity">
    <reaction evidence="3">
        <text>1-dodecanoyl-sn-glycero-3-phosphocholine + (5Z,8Z,11Z,14Z)-eicosatetraenoyl-CoA = 1-dodecanoyl-2-(5Z,8Z,11Z,14Z)-eicosatetraenoyl-sn-glycero-3-phosphocholine + CoA</text>
        <dbReference type="Rhea" id="RHEA:37483"/>
        <dbReference type="ChEBI" id="CHEBI:57287"/>
        <dbReference type="ChEBI" id="CHEBI:57368"/>
        <dbReference type="ChEBI" id="CHEBI:74966"/>
        <dbReference type="ChEBI" id="CHEBI:74967"/>
    </reaction>
    <physiologicalReaction direction="left-to-right" evidence="3">
        <dbReference type="Rhea" id="RHEA:37484"/>
    </physiologicalReaction>
</comment>
<comment type="catalytic activity">
    <reaction evidence="2">
        <text>(5Z,8Z,11Z,14Z)-eicosatetraenoyl-CoA + 1-hexadecanoyl-sn-glycero-3-phosphocholine = 1-hexadecanoyl-2-(5Z,8Z,11Z,14Z-eicosatetraenoyl)-sn-glycero-3-phosphocholine + CoA</text>
        <dbReference type="Rhea" id="RHEA:35999"/>
        <dbReference type="ChEBI" id="CHEBI:57287"/>
        <dbReference type="ChEBI" id="CHEBI:57368"/>
        <dbReference type="ChEBI" id="CHEBI:72998"/>
        <dbReference type="ChEBI" id="CHEBI:73003"/>
    </reaction>
    <physiologicalReaction direction="left-to-right" evidence="2">
        <dbReference type="Rhea" id="RHEA:36000"/>
    </physiologicalReaction>
</comment>
<comment type="catalytic activity">
    <reaction evidence="3">
        <text>1-octadecanoyl-sn-glycero-3-phosphocholine + (5Z,8Z,11Z,14Z)-eicosatetraenoyl-CoA = 1-octadecanoyl-2-(5Z,8Z,11Z,14Z-eicosatetraenoyl)-sn-glycero-3-phosphocholine + CoA</text>
        <dbReference type="Rhea" id="RHEA:37479"/>
        <dbReference type="ChEBI" id="CHEBI:57287"/>
        <dbReference type="ChEBI" id="CHEBI:57368"/>
        <dbReference type="ChEBI" id="CHEBI:73858"/>
        <dbReference type="ChEBI" id="CHEBI:74965"/>
    </reaction>
    <physiologicalReaction direction="left-to-right" evidence="3">
        <dbReference type="Rhea" id="RHEA:37480"/>
    </physiologicalReaction>
</comment>
<comment type="catalytic activity">
    <reaction evidence="3">
        <text>1-eicosanoyl-sn-glycero-3-phosphocholine + (5Z,8Z,11Z,14Z)-eicosatetraenoyl-CoA = 1-eicosanoyl-2-(5Z,8Z,11Z,14Z)-eicosatetraenoyl-sn-glycero-3-phosphocholine + CoA</text>
        <dbReference type="Rhea" id="RHEA:37487"/>
        <dbReference type="ChEBI" id="CHEBI:57287"/>
        <dbReference type="ChEBI" id="CHEBI:57368"/>
        <dbReference type="ChEBI" id="CHEBI:74968"/>
        <dbReference type="ChEBI" id="CHEBI:74970"/>
    </reaction>
    <physiologicalReaction direction="left-to-right" evidence="3">
        <dbReference type="Rhea" id="RHEA:37488"/>
    </physiologicalReaction>
</comment>
<comment type="catalytic activity">
    <reaction evidence="2">
        <text>1-(9Z-octadecenoyl)-sn-glycero-3-phosphocholine + (9Z)-octadecenoyl-CoA = 1,2-di-(9Z-octadecenoyl)-sn-glycero-3-phosphocholine + CoA</text>
        <dbReference type="Rhea" id="RHEA:37387"/>
        <dbReference type="ChEBI" id="CHEBI:28610"/>
        <dbReference type="ChEBI" id="CHEBI:57287"/>
        <dbReference type="ChEBI" id="CHEBI:57387"/>
        <dbReference type="ChEBI" id="CHEBI:74669"/>
    </reaction>
    <physiologicalReaction direction="left-to-right" evidence="2">
        <dbReference type="Rhea" id="RHEA:37388"/>
    </physiologicalReaction>
</comment>
<comment type="catalytic activity">
    <reaction evidence="2">
        <text>1-(9Z-octadecenoyl)-sn-glycero-3-phosphocholine + (9Z,12Z)-octadecadienoyl-CoA = 1-(9Z)-octadecenoyl-2-(9Z,12Z)-octadecadienoyl-sn-glycero-3-phosphocholine + CoA</text>
        <dbReference type="Rhea" id="RHEA:37391"/>
        <dbReference type="ChEBI" id="CHEBI:28610"/>
        <dbReference type="ChEBI" id="CHEBI:57287"/>
        <dbReference type="ChEBI" id="CHEBI:57383"/>
        <dbReference type="ChEBI" id="CHEBI:74670"/>
    </reaction>
    <physiologicalReaction direction="left-to-right" evidence="2">
        <dbReference type="Rhea" id="RHEA:37392"/>
    </physiologicalReaction>
</comment>
<comment type="catalytic activity">
    <reaction evidence="2">
        <text>1-(9Z-octadecenoyl)-sn-glycero-3-phosphocholine + (5Z,8Z,11Z,14Z)-eicosatetraenoyl-CoA = 1-(9Z)-octadecenoyl-2-(5Z,8Z,11Z,14Z)-icosatetraenoyl-sn-glycero-3-phosphocholine + CoA</text>
        <dbReference type="Rhea" id="RHEA:37395"/>
        <dbReference type="ChEBI" id="CHEBI:28610"/>
        <dbReference type="ChEBI" id="CHEBI:57287"/>
        <dbReference type="ChEBI" id="CHEBI:57368"/>
        <dbReference type="ChEBI" id="CHEBI:74671"/>
    </reaction>
    <physiologicalReaction direction="left-to-right" evidence="2">
        <dbReference type="Rhea" id="RHEA:37396"/>
    </physiologicalReaction>
</comment>
<comment type="catalytic activity">
    <reaction evidence="2">
        <text>a 1-acyl-sn-glycero-3-phosphoethanolamine + (9Z,12Z)-octadecadienoyl-CoA = 1-acyl-2-(9Z,12Z)-octadecadienoyl-sn-glycero-3-phosphoethanolamine + CoA</text>
        <dbReference type="Rhea" id="RHEA:37579"/>
        <dbReference type="ChEBI" id="CHEBI:57287"/>
        <dbReference type="ChEBI" id="CHEBI:57383"/>
        <dbReference type="ChEBI" id="CHEBI:64381"/>
        <dbReference type="ChEBI" id="CHEBI:75069"/>
    </reaction>
    <physiologicalReaction direction="left-to-right" evidence="2">
        <dbReference type="Rhea" id="RHEA:37580"/>
    </physiologicalReaction>
</comment>
<comment type="catalytic activity">
    <reaction evidence="3">
        <text>1-(9Z-octadecenoyl)-sn-glycero-3-phosphoethanolamine + (9Z,12Z)-octadecadienoyl-CoA = 1-(9Z)-octadecenoyl-2-(9Z,12Z)-octadecadienoyl-sn-glycero-3-phosphoethanolamine + CoA</text>
        <dbReference type="Rhea" id="RHEA:37503"/>
        <dbReference type="ChEBI" id="CHEBI:57287"/>
        <dbReference type="ChEBI" id="CHEBI:57383"/>
        <dbReference type="ChEBI" id="CHEBI:74971"/>
        <dbReference type="ChEBI" id="CHEBI:74977"/>
    </reaction>
    <physiologicalReaction direction="left-to-right" evidence="3">
        <dbReference type="Rhea" id="RHEA:37504"/>
    </physiologicalReaction>
</comment>
<comment type="catalytic activity">
    <reaction evidence="3">
        <text>1-(10Z-heptadecenoyl)-sn-glycero-3-phosphoethanolamine + (9Z,12Z)-octadecadienoyl-CoA = 1-(10Z-heptadecenoyl)-2-(9Z,12Z-octadecadienoyl)-sn-glycero-3-phosphoethanolamine + CoA</text>
        <dbReference type="Rhea" id="RHEA:64228"/>
        <dbReference type="ChEBI" id="CHEBI:57287"/>
        <dbReference type="ChEBI" id="CHEBI:57383"/>
        <dbReference type="ChEBI" id="CHEBI:149768"/>
        <dbReference type="ChEBI" id="CHEBI:149770"/>
    </reaction>
    <physiologicalReaction direction="left-to-right" evidence="3">
        <dbReference type="Rhea" id="RHEA:64229"/>
    </physiologicalReaction>
</comment>
<comment type="catalytic activity">
    <reaction evidence="2">
        <text>a 1-acyl-sn-glycero-3-phosphoethanolamine + (5Z,8Z,11Z,14Z)-eicosatetraenoyl-CoA = 1-acyl-2-(5Z,8Z,11Z,14Z)-eicosatetraenoyl-sn-glycero-3-phosphoethanolamine + CoA</text>
        <dbReference type="Rhea" id="RHEA:37575"/>
        <dbReference type="ChEBI" id="CHEBI:57287"/>
        <dbReference type="ChEBI" id="CHEBI:57368"/>
        <dbReference type="ChEBI" id="CHEBI:64381"/>
        <dbReference type="ChEBI" id="CHEBI:75067"/>
    </reaction>
    <physiologicalReaction direction="left-to-right" evidence="2">
        <dbReference type="Rhea" id="RHEA:37576"/>
    </physiologicalReaction>
</comment>
<comment type="catalytic activity">
    <reaction evidence="2">
        <text>1-hexadecanoyl-sn-glycero-3-phosphoethanolamine + (5Z,8Z,11Z,14Z)-eicosatetraenoyl-CoA = 1-hexadecanoyl-2-(5Z,8Z,11Z,14Z-eicosatetraenoyl)-sn-glycero-3-phosphoethanolamine + CoA</text>
        <dbReference type="Rhea" id="RHEA:36023"/>
        <dbReference type="ChEBI" id="CHEBI:57287"/>
        <dbReference type="ChEBI" id="CHEBI:57368"/>
        <dbReference type="ChEBI" id="CHEBI:73004"/>
        <dbReference type="ChEBI" id="CHEBI:73009"/>
    </reaction>
    <physiologicalReaction direction="left-to-right" evidence="2">
        <dbReference type="Rhea" id="RHEA:36024"/>
    </physiologicalReaction>
</comment>
<comment type="catalytic activity">
    <reaction evidence="3">
        <text>1-(9Z-octadecenoyl)-sn-glycero-3-phosphoethanolamine + (5Z,8Z,11Z,14Z)-eicosatetraenoyl-CoA = 1-(9Z)-octadecenoyl-2-(5Z,8Z,11Z,14Z)-eicosatetraenoyl-sn-glycero-3-phosphoethanolamine + CoA</text>
        <dbReference type="Rhea" id="RHEA:37495"/>
        <dbReference type="ChEBI" id="CHEBI:57287"/>
        <dbReference type="ChEBI" id="CHEBI:57368"/>
        <dbReference type="ChEBI" id="CHEBI:74971"/>
        <dbReference type="ChEBI" id="CHEBI:74975"/>
    </reaction>
    <physiologicalReaction direction="left-to-right" evidence="3">
        <dbReference type="Rhea" id="RHEA:37496"/>
    </physiologicalReaction>
</comment>
<comment type="catalytic activity">
    <reaction evidence="3">
        <text>1-(10Z-heptadecenoyl)-sn-glycero-3-phosphoethanolamine + (5Z,8Z,11Z,14Z)-eicosatetraenoyl-CoA = 1-(10Z-heptadecenoyl)-2-(5Z,8Z,11Z,14Z-eicosatetraenoyl)-sn-glycero-3-phosphoethanolamine + CoA</text>
        <dbReference type="Rhea" id="RHEA:64204"/>
        <dbReference type="ChEBI" id="CHEBI:57287"/>
        <dbReference type="ChEBI" id="CHEBI:57368"/>
        <dbReference type="ChEBI" id="CHEBI:149768"/>
        <dbReference type="ChEBI" id="CHEBI:149769"/>
    </reaction>
    <physiologicalReaction direction="left-to-right" evidence="3">
        <dbReference type="Rhea" id="RHEA:64205"/>
    </physiologicalReaction>
</comment>
<comment type="catalytic activity">
    <reaction evidence="3">
        <text>a 1-O-(1Z-alkenyl)-sn-glycero-3-phosphoethanolamine + (5Z,8Z,11Z,14Z)-eicosatetraenoyl-CoA = 1-O-(1Z)-alkenyl-2-(5Z,8Z,11Z,14Z)-eicosatetraenoyl-sn-glycero-3-phosphoethanolamine + CoA</text>
        <dbReference type="Rhea" id="RHEA:37635"/>
        <dbReference type="ChEBI" id="CHEBI:57287"/>
        <dbReference type="ChEBI" id="CHEBI:57368"/>
        <dbReference type="ChEBI" id="CHEBI:77288"/>
        <dbReference type="ChEBI" id="CHEBI:77295"/>
    </reaction>
    <physiologicalReaction direction="left-to-right" evidence="3">
        <dbReference type="Rhea" id="RHEA:37636"/>
    </physiologicalReaction>
</comment>
<comment type="catalytic activity">
    <reaction evidence="2">
        <text>a 1-acyl-sn-glycero-3-phospho-L-serine + (9Z,12Z)-octadecadienoyl-CoA = 1-acyl-2-(9Z,12Z-octadecadienoyl)-sn-glycero-3-phospho-L-serine + CoA</text>
        <dbReference type="Rhea" id="RHEA:37567"/>
        <dbReference type="ChEBI" id="CHEBI:57287"/>
        <dbReference type="ChEBI" id="CHEBI:57383"/>
        <dbReference type="ChEBI" id="CHEBI:64379"/>
        <dbReference type="ChEBI" id="CHEBI:75066"/>
    </reaction>
    <physiologicalReaction direction="left-to-right" evidence="2">
        <dbReference type="Rhea" id="RHEA:37568"/>
    </physiologicalReaction>
</comment>
<comment type="catalytic activity">
    <reaction evidence="2">
        <text>a 1-acyl-sn-glycero-3-phospho-L-serine + (5Z,8Z,11Z,14Z)-eicosatetraenoyl-CoA = 1-acyl-2-(5Z,8Z,11Z,14Z-eicosatetraenoyl)-sn-glycero-3-phospho-L-serine + CoA</text>
        <dbReference type="Rhea" id="RHEA:37571"/>
        <dbReference type="ChEBI" id="CHEBI:57287"/>
        <dbReference type="ChEBI" id="CHEBI:57368"/>
        <dbReference type="ChEBI" id="CHEBI:64379"/>
        <dbReference type="ChEBI" id="CHEBI:75065"/>
    </reaction>
    <physiologicalReaction direction="left-to-right" evidence="2">
        <dbReference type="Rhea" id="RHEA:37572"/>
    </physiologicalReaction>
</comment>
<comment type="catalytic activity">
    <reaction evidence="2">
        <text>1-hexadecanoyl-sn-glycero-3-phospho-L-serine + (9Z)-octadecenoyl-CoA = 1-hexadecanoyl-2-(9Z-octadecenoyl)-sn-glycero-3-phospho-L-serine + CoA</text>
        <dbReference type="Rhea" id="RHEA:37531"/>
        <dbReference type="ChEBI" id="CHEBI:57287"/>
        <dbReference type="ChEBI" id="CHEBI:57387"/>
        <dbReference type="ChEBI" id="CHEBI:75020"/>
        <dbReference type="ChEBI" id="CHEBI:75029"/>
    </reaction>
    <physiologicalReaction direction="left-to-right" evidence="2">
        <dbReference type="Rhea" id="RHEA:37532"/>
    </physiologicalReaction>
</comment>
<comment type="catalytic activity">
    <reaction evidence="3">
        <text>1-(9Z-octadecenoyl)-sn-glycero-3-phospho-L-serine + (9Z)-octadecenoyl-CoA = 1,2-di-(9Z)-octadecenoyl-sn-glycero-3-phospho-L-serine + CoA</text>
        <dbReference type="Rhea" id="RHEA:37407"/>
        <dbReference type="ChEBI" id="CHEBI:57287"/>
        <dbReference type="ChEBI" id="CHEBI:57387"/>
        <dbReference type="ChEBI" id="CHEBI:74617"/>
        <dbReference type="ChEBI" id="CHEBI:74905"/>
    </reaction>
    <physiologicalReaction direction="left-to-right" evidence="3">
        <dbReference type="Rhea" id="RHEA:37408"/>
    </physiologicalReaction>
</comment>
<comment type="catalytic activity">
    <reaction evidence="2">
        <text>1-hexadecanoyl-sn-glycero-3-phospho-L-serine + (9Z,12Z)-octadecadienoyl-CoA = 1-hexadecanoyl-2-(9Z,12Z-octadecadienoyl)-sn-glycero-3-phospho-L-serine + CoA</text>
        <dbReference type="Rhea" id="RHEA:37535"/>
        <dbReference type="ChEBI" id="CHEBI:57287"/>
        <dbReference type="ChEBI" id="CHEBI:57383"/>
        <dbReference type="ChEBI" id="CHEBI:75020"/>
        <dbReference type="ChEBI" id="CHEBI:75031"/>
    </reaction>
    <physiologicalReaction direction="left-to-right" evidence="2">
        <dbReference type="Rhea" id="RHEA:37536"/>
    </physiologicalReaction>
</comment>
<comment type="catalytic activity">
    <reaction evidence="2">
        <text>1-(9Z-octadecenoyl)-sn-glycero-3-phospho-L-serine + (9Z,12Z)-octadecadienoyl-CoA = 1-(9Z-octadecenoyl)-2-(9Z,12Z-octadienoyl)-sn-glycero-3-phospho-L-serine + CoA</text>
        <dbReference type="Rhea" id="RHEA:37375"/>
        <dbReference type="ChEBI" id="CHEBI:57287"/>
        <dbReference type="ChEBI" id="CHEBI:57383"/>
        <dbReference type="ChEBI" id="CHEBI:74617"/>
        <dbReference type="ChEBI" id="CHEBI:74892"/>
    </reaction>
    <physiologicalReaction direction="left-to-right" evidence="2">
        <dbReference type="Rhea" id="RHEA:37376"/>
    </physiologicalReaction>
</comment>
<comment type="catalytic activity">
    <reaction evidence="2">
        <text>1-hexadecanoyl-sn-glycero-3-phospho-L-serine + (5Z,8Z,11Z,14Z)-eicosatetraenoyl-CoA = 1-hexadecanoyl-2-(5Z,8Z,11Z,14Z-eicosatetraenoyl)-sn-glycero-3-phospho-L-serine + CoA</text>
        <dbReference type="Rhea" id="RHEA:37539"/>
        <dbReference type="ChEBI" id="CHEBI:57287"/>
        <dbReference type="ChEBI" id="CHEBI:57368"/>
        <dbReference type="ChEBI" id="CHEBI:75020"/>
        <dbReference type="ChEBI" id="CHEBI:75032"/>
    </reaction>
    <physiologicalReaction direction="left-to-right" evidence="2">
        <dbReference type="Rhea" id="RHEA:37540"/>
    </physiologicalReaction>
</comment>
<comment type="catalytic activity">
    <reaction evidence="2">
        <text>1-(9Z-octadecenoyl)-sn-glycero-3-phospho-L-serine + (5Z,8Z,11Z,14Z)-eicosatetraenoyl-CoA = 1-(9Z-octadecenoyl)-2-(5Z,8Z,11Z,14Z-eicosatetraenoyl)-sn-glycero-3-phospho-L-serine + CoA</text>
        <dbReference type="Rhea" id="RHEA:37379"/>
        <dbReference type="ChEBI" id="CHEBI:57287"/>
        <dbReference type="ChEBI" id="CHEBI:57368"/>
        <dbReference type="ChEBI" id="CHEBI:74617"/>
        <dbReference type="ChEBI" id="CHEBI:74897"/>
    </reaction>
    <physiologicalReaction direction="left-to-right" evidence="2">
        <dbReference type="Rhea" id="RHEA:37380"/>
    </physiologicalReaction>
</comment>
<comment type="pathway">
    <text evidence="2">Lipid metabolism; phospholipid metabolism.</text>
</comment>
<comment type="subcellular location">
    <subcellularLocation>
        <location evidence="2">Endoplasmic reticulum membrane</location>
        <topology evidence="4">Multi-pass membrane protein</topology>
    </subcellularLocation>
</comment>
<comment type="domain">
    <text evidence="1">The di-lysine motif confers endoplasmic reticulum localization.</text>
</comment>
<comment type="similarity">
    <text evidence="4">Belongs to the membrane-bound acyltransferase family.</text>
</comment>
<comment type="sequence caution" evidence="5">
    <conflict type="frameshift">
        <sequence resource="EMBL-CDS" id="AAX46715"/>
    </conflict>
</comment>
<sequence>MASAAEGDMEAELTRGLLWGFQDLSLNKLATSLGASEQALRLIISIFLGYPFALFYRRYLFYKDSYLIHLFHTFTGLSIAYYNFGTQLYHSLLCIVLQFLILRLMGRTITAVLTTFCVQMGYLLAGYYNTATGTYDIKWTMPHCVLTLKLIGLAMDYYDGGKDQKSLTSEQQIYAIWGVPSLLEISGFSYFYGAFLVGPQFSMNHYMKLVRGELTDVPGKIPNSTIPALRRLALGLVYLVGYTLLSPHITEDYLLSDDYENGSFWFRCMYMLIWGKFVLYKYVTCWLVTEGVCILTGLGFNGLDEYGTAKWDACANMKVWLFETTPRFTGTIASFNINTNAWVARYFFKRLKFLGNKVLSQGLSLLFLALWHGLHSGYLVCFQMEFLIVIVERQAASLIRDSPVLSRLASITVLQPLYYLAQQTIHWLFMGYSMTAFCLFTWDKWMKVYKSIYFLGHVFFLSLLFILPYVRKVMVPRKEKLKKME</sequence>
<evidence type="ECO:0000250" key="1"/>
<evidence type="ECO:0000250" key="2">
    <source>
        <dbReference type="UniProtKB" id="Q6P1A2"/>
    </source>
</evidence>
<evidence type="ECO:0000250" key="3">
    <source>
        <dbReference type="UniProtKB" id="Q91V01"/>
    </source>
</evidence>
<evidence type="ECO:0000255" key="4"/>
<evidence type="ECO:0000305" key="5"/>
<evidence type="ECO:0000312" key="6">
    <source>
        <dbReference type="EMBL" id="AAI02803.1"/>
    </source>
</evidence>
<evidence type="ECO:0000312" key="7">
    <source>
        <dbReference type="EMBL" id="AAX46715.1"/>
    </source>
</evidence>
<proteinExistence type="evidence at transcript level"/>
<feature type="initiator methionine" description="Removed" evidence="2">
    <location>
        <position position="1"/>
    </location>
</feature>
<feature type="chain" id="PRO_0000233381" description="Lysophospholipid acyltransferase 5">
    <location>
        <begin position="2"/>
        <end position="485"/>
    </location>
</feature>
<feature type="transmembrane region" description="Helical" evidence="4">
    <location>
        <begin position="35"/>
        <end position="55"/>
    </location>
</feature>
<feature type="transmembrane region" description="Helical" evidence="4">
    <location>
        <begin position="82"/>
        <end position="102"/>
    </location>
</feature>
<feature type="transmembrane region" description="Helical" evidence="4">
    <location>
        <begin position="108"/>
        <end position="128"/>
    </location>
</feature>
<feature type="transmembrane region" description="Helical" evidence="4">
    <location>
        <begin position="139"/>
        <end position="158"/>
    </location>
</feature>
<feature type="transmembrane region" description="Helical" evidence="4">
    <location>
        <begin position="176"/>
        <end position="196"/>
    </location>
</feature>
<feature type="transmembrane region" description="Helical" evidence="4">
    <location>
        <begin position="232"/>
        <end position="252"/>
    </location>
</feature>
<feature type="transmembrane region" description="Helical" evidence="4">
    <location>
        <begin position="283"/>
        <end position="303"/>
    </location>
</feature>
<feature type="transmembrane region" description="Helical" evidence="4">
    <location>
        <begin position="362"/>
        <end position="382"/>
    </location>
</feature>
<feature type="transmembrane region" description="Helical" evidence="4">
    <location>
        <begin position="420"/>
        <end position="440"/>
    </location>
</feature>
<feature type="transmembrane region" description="Helical" evidence="4">
    <location>
        <begin position="448"/>
        <end position="468"/>
    </location>
</feature>
<feature type="short sequence motif" description="Di-lysine motif">
    <location>
        <begin position="482"/>
        <end position="485"/>
    </location>
</feature>
<feature type="active site" evidence="1">
    <location>
        <position position="336"/>
    </location>
</feature>
<feature type="active site" evidence="1">
    <location>
        <position position="372"/>
    </location>
</feature>
<feature type="modified residue" description="N-acetylalanine" evidence="2">
    <location>
        <position position="2"/>
    </location>
</feature>
<protein>
    <recommendedName>
        <fullName>Lysophospholipid acyltransferase 5</fullName>
        <shortName>LPLAT 5</shortName>
        <ecNumber evidence="2">2.3.1.-</ecNumber>
    </recommendedName>
    <alternativeName>
        <fullName>1-acylglycerophosphocholine O-acyltransferase</fullName>
        <ecNumber evidence="2">2.3.1.23</ecNumber>
    </alternativeName>
    <alternativeName>
        <fullName>1-acylglycerophosphoethanolamine O-acyltransferase</fullName>
        <ecNumber evidence="2">2.3.1.n7</ecNumber>
    </alternativeName>
    <alternativeName>
        <fullName>1-acylglycerophosphoserine O-acyltransferase</fullName>
        <ecNumber evidence="2">2.3.1.n6</ecNumber>
    </alternativeName>
    <alternativeName>
        <fullName>Lysophosphatidylcholine acyltransferase 3</fullName>
        <shortName>Lyso-PC acyltransferase 3</shortName>
    </alternativeName>
    <alternativeName>
        <fullName>Membrane-bound O-acyltransferase domain-containing protein 5</fullName>
        <shortName>O-acyltransferase domain-containing protein 5</shortName>
    </alternativeName>
</protein>
<dbReference type="EC" id="2.3.1.-" evidence="2"/>
<dbReference type="EC" id="2.3.1.23" evidence="2"/>
<dbReference type="EC" id="2.3.1.n7" evidence="2"/>
<dbReference type="EC" id="2.3.1.n6" evidence="2"/>
<dbReference type="EMBL" id="BT021868">
    <property type="protein sequence ID" value="AAX46715.1"/>
    <property type="status" value="ALT_FRAME"/>
    <property type="molecule type" value="mRNA"/>
</dbReference>
<dbReference type="EMBL" id="BC102802">
    <property type="protein sequence ID" value="AAI02803.1"/>
    <property type="molecule type" value="mRNA"/>
</dbReference>
<dbReference type="RefSeq" id="NP_001019717.2">
    <property type="nucleotide sequence ID" value="NM_001024546.2"/>
</dbReference>
<dbReference type="SMR" id="Q3SZL3"/>
<dbReference type="FunCoup" id="Q3SZL3">
    <property type="interactions" value="1135"/>
</dbReference>
<dbReference type="STRING" id="9913.ENSBTAP00000052356"/>
<dbReference type="PaxDb" id="9913-ENSBTAP00000052356"/>
<dbReference type="GeneID" id="515361"/>
<dbReference type="KEGG" id="bta:515361"/>
<dbReference type="CTD" id="10162"/>
<dbReference type="eggNOG" id="KOG2705">
    <property type="taxonomic scope" value="Eukaryota"/>
</dbReference>
<dbReference type="InParanoid" id="Q3SZL3"/>
<dbReference type="OrthoDB" id="5974730at2759"/>
<dbReference type="UniPathway" id="UPA00085"/>
<dbReference type="Proteomes" id="UP000009136">
    <property type="component" value="Unplaced"/>
</dbReference>
<dbReference type="GO" id="GO:0005789">
    <property type="term" value="C:endoplasmic reticulum membrane"/>
    <property type="evidence" value="ECO:0000250"/>
    <property type="project" value="UniProtKB"/>
</dbReference>
<dbReference type="GO" id="GO:0016020">
    <property type="term" value="C:membrane"/>
    <property type="evidence" value="ECO:0000318"/>
    <property type="project" value="GO_Central"/>
</dbReference>
<dbReference type="GO" id="GO:0047184">
    <property type="term" value="F:1-acylglycerophosphocholine O-acyltransferase activity"/>
    <property type="evidence" value="ECO:0000250"/>
    <property type="project" value="UniProtKB"/>
</dbReference>
<dbReference type="GO" id="GO:0106262">
    <property type="term" value="F:1-acylglycerophosphoethanolamine O-acyltransferase activity"/>
    <property type="evidence" value="ECO:0000250"/>
    <property type="project" value="UniProtKB"/>
</dbReference>
<dbReference type="GO" id="GO:0106263">
    <property type="term" value="F:1-acylglycerophosphoserine O-acyltransferase activity"/>
    <property type="evidence" value="ECO:0000250"/>
    <property type="project" value="UniProtKB"/>
</dbReference>
<dbReference type="GO" id="GO:0071617">
    <property type="term" value="F:lysophospholipid acyltransferase activity"/>
    <property type="evidence" value="ECO:0000318"/>
    <property type="project" value="GO_Central"/>
</dbReference>
<dbReference type="GO" id="GO:0034378">
    <property type="term" value="P:chylomicron assembly"/>
    <property type="evidence" value="ECO:0000250"/>
    <property type="project" value="UniProtKB"/>
</dbReference>
<dbReference type="GO" id="GO:0090158">
    <property type="term" value="P:endoplasmic reticulum membrane organization"/>
    <property type="evidence" value="ECO:0000250"/>
    <property type="project" value="UniProtKB"/>
</dbReference>
<dbReference type="GO" id="GO:0036335">
    <property type="term" value="P:intestinal stem cell homeostasis"/>
    <property type="evidence" value="ECO:0000250"/>
    <property type="project" value="UniProtKB"/>
</dbReference>
<dbReference type="GO" id="GO:0030258">
    <property type="term" value="P:lipid modification"/>
    <property type="evidence" value="ECO:0000318"/>
    <property type="project" value="GO_Central"/>
</dbReference>
<dbReference type="GO" id="GO:0050728">
    <property type="term" value="P:negative regulation of inflammatory response"/>
    <property type="evidence" value="ECO:0000250"/>
    <property type="project" value="UniProtKB"/>
</dbReference>
<dbReference type="GO" id="GO:1903573">
    <property type="term" value="P:negative regulation of response to endoplasmic reticulum stress"/>
    <property type="evidence" value="ECO:0000250"/>
    <property type="project" value="UniProtKB"/>
</dbReference>
<dbReference type="GO" id="GO:0036151">
    <property type="term" value="P:phosphatidylcholine acyl-chain remodeling"/>
    <property type="evidence" value="ECO:0000250"/>
    <property type="project" value="UniProtKB"/>
</dbReference>
<dbReference type="GO" id="GO:0006656">
    <property type="term" value="P:phosphatidylcholine biosynthetic process"/>
    <property type="evidence" value="ECO:0000318"/>
    <property type="project" value="GO_Central"/>
</dbReference>
<dbReference type="GO" id="GO:0036152">
    <property type="term" value="P:phosphatidylethanolamine acyl-chain remodeling"/>
    <property type="evidence" value="ECO:0000250"/>
    <property type="project" value="UniProtKB"/>
</dbReference>
<dbReference type="GO" id="GO:0036150">
    <property type="term" value="P:phosphatidylserine acyl-chain remodeling"/>
    <property type="evidence" value="ECO:0000250"/>
    <property type="project" value="UniProtKB"/>
</dbReference>
<dbReference type="GO" id="GO:0045797">
    <property type="term" value="P:positive regulation of intestinal cholesterol absorption"/>
    <property type="evidence" value="ECO:0000250"/>
    <property type="project" value="UniProtKB"/>
</dbReference>
<dbReference type="GO" id="GO:1905885">
    <property type="term" value="P:positive regulation of triglyceride transport"/>
    <property type="evidence" value="ECO:0000250"/>
    <property type="project" value="UniProtKB"/>
</dbReference>
<dbReference type="GO" id="GO:0045540">
    <property type="term" value="P:regulation of cholesterol biosynthetic process"/>
    <property type="evidence" value="ECO:0000250"/>
    <property type="project" value="UniProtKB"/>
</dbReference>
<dbReference type="GO" id="GO:0034379">
    <property type="term" value="P:very-low-density lipoprotein particle assembly"/>
    <property type="evidence" value="ECO:0000250"/>
    <property type="project" value="UniProtKB"/>
</dbReference>
<dbReference type="InterPro" id="IPR049941">
    <property type="entry name" value="LPLAT_7/PORCN-like"/>
</dbReference>
<dbReference type="InterPro" id="IPR004299">
    <property type="entry name" value="MBOAT_fam"/>
</dbReference>
<dbReference type="PANTHER" id="PTHR13906:SF14">
    <property type="entry name" value="LYSOPHOSPHOLIPID ACYLTRANSFERASE 5"/>
    <property type="match status" value="1"/>
</dbReference>
<dbReference type="PANTHER" id="PTHR13906">
    <property type="entry name" value="PORCUPINE"/>
    <property type="match status" value="1"/>
</dbReference>
<dbReference type="Pfam" id="PF03062">
    <property type="entry name" value="MBOAT"/>
    <property type="match status" value="1"/>
</dbReference>